<feature type="chain" id="PRO_0000457395" description="Melanoma-associated antigen B6B">
    <location>
        <begin position="1"/>
        <end position="407"/>
    </location>
</feature>
<feature type="domain" description="MAGE" evidence="1">
    <location>
        <begin position="195"/>
        <end position="394"/>
    </location>
</feature>
<feature type="region of interest" description="Disordered" evidence="2">
    <location>
        <begin position="1"/>
        <end position="185"/>
    </location>
</feature>
<feature type="compositionally biased region" description="Basic residues" evidence="2">
    <location>
        <begin position="1"/>
        <end position="16"/>
    </location>
</feature>
<feature type="compositionally biased region" description="Polar residues" evidence="2">
    <location>
        <begin position="56"/>
        <end position="68"/>
    </location>
</feature>
<feature type="compositionally biased region" description="Polar residues" evidence="2">
    <location>
        <begin position="94"/>
        <end position="109"/>
    </location>
</feature>
<feature type="compositionally biased region" description="Basic and acidic residues" evidence="2">
    <location>
        <begin position="123"/>
        <end position="132"/>
    </location>
</feature>
<feature type="compositionally biased region" description="Polar residues" evidence="2">
    <location>
        <begin position="133"/>
        <end position="155"/>
    </location>
</feature>
<keyword id="KW-1267">Proteomics identification</keyword>
<keyword id="KW-1185">Reference proteome</keyword>
<protein>
    <recommendedName>
        <fullName evidence="3">Melanoma-associated antigen B6B</fullName>
    </recommendedName>
</protein>
<organism>
    <name type="scientific">Homo sapiens</name>
    <name type="common">Human</name>
    <dbReference type="NCBI Taxonomy" id="9606"/>
    <lineage>
        <taxon>Eukaryota</taxon>
        <taxon>Metazoa</taxon>
        <taxon>Chordata</taxon>
        <taxon>Craniata</taxon>
        <taxon>Vertebrata</taxon>
        <taxon>Euteleostomi</taxon>
        <taxon>Mammalia</taxon>
        <taxon>Eutheria</taxon>
        <taxon>Euarchontoglires</taxon>
        <taxon>Primates</taxon>
        <taxon>Haplorrhini</taxon>
        <taxon>Catarrhini</taxon>
        <taxon>Hominidae</taxon>
        <taxon>Homo</taxon>
    </lineage>
</organism>
<dbReference type="EMBL" id="AC129850">
    <property type="status" value="NOT_ANNOTATED_CDS"/>
    <property type="molecule type" value="Genomic_DNA"/>
</dbReference>
<dbReference type="CCDS" id="CCDS94582.1"/>
<dbReference type="RefSeq" id="NP_001382958.1">
    <property type="nucleotide sequence ID" value="NM_001396029.1"/>
</dbReference>
<dbReference type="SMR" id="A0A0J9YX57"/>
<dbReference type="FunCoup" id="A0A0J9YX57">
    <property type="interactions" value="22"/>
</dbReference>
<dbReference type="STRING" id="9606.ENSP00000488257"/>
<dbReference type="BioMuta" id="MAGEB6P1"/>
<dbReference type="MassIVE" id="A0A0J9YX57"/>
<dbReference type="PeptideAtlas" id="A0A0J9YX57"/>
<dbReference type="Ensembl" id="ENST00000416929.3">
    <property type="protein sequence ID" value="ENSP00000488257.1"/>
    <property type="gene ID" value="ENSG00000232030.4"/>
</dbReference>
<dbReference type="GeneID" id="392433"/>
<dbReference type="MANE-Select" id="ENST00000416929.3">
    <property type="protein sequence ID" value="ENSP00000488257.1"/>
    <property type="RefSeq nucleotide sequence ID" value="NM_001396029.1"/>
    <property type="RefSeq protein sequence ID" value="NP_001382958.1"/>
</dbReference>
<dbReference type="AGR" id="HGNC:28824"/>
<dbReference type="GeneCards" id="MAGEB6B"/>
<dbReference type="HGNC" id="HGNC:28824">
    <property type="gene designation" value="MAGEB6B"/>
</dbReference>
<dbReference type="VEuPathDB" id="HostDB:ENSG00000232030"/>
<dbReference type="GeneTree" id="ENSGT00940000159951"/>
<dbReference type="InParanoid" id="A0A0J9YX57"/>
<dbReference type="OMA" id="NRKASKM"/>
<dbReference type="OrthoDB" id="9536128at2759"/>
<dbReference type="PAN-GO" id="A0A0J9YX57">
    <property type="GO annotations" value="2 GO annotations based on evolutionary models"/>
</dbReference>
<dbReference type="PRO" id="PR:A0A0J9YX57"/>
<dbReference type="Proteomes" id="UP000005640">
    <property type="component" value="Chromosome X"/>
</dbReference>
<dbReference type="RNAct" id="A0A0J9YX57">
    <property type="molecule type" value="protein"/>
</dbReference>
<dbReference type="Bgee" id="ENSG00000232030">
    <property type="expression patterns" value="Expressed in right testis and 1 other cell type or tissue"/>
</dbReference>
<dbReference type="GO" id="GO:0005634">
    <property type="term" value="C:nucleus"/>
    <property type="evidence" value="ECO:0000318"/>
    <property type="project" value="GO_Central"/>
</dbReference>
<dbReference type="GO" id="GO:0000122">
    <property type="term" value="P:negative regulation of transcription by RNA polymerase II"/>
    <property type="evidence" value="ECO:0000318"/>
    <property type="project" value="GO_Central"/>
</dbReference>
<dbReference type="FunFam" id="1.10.10.1210:FF:000001">
    <property type="entry name" value="melanoma-associated antigen D1"/>
    <property type="match status" value="1"/>
</dbReference>
<dbReference type="Gene3D" id="1.10.10.1200">
    <property type="entry name" value="MAGE homology domain, winged helix WH1 motif"/>
    <property type="match status" value="1"/>
</dbReference>
<dbReference type="Gene3D" id="1.10.10.1210">
    <property type="entry name" value="MAGE homology domain, winged helix WH2 motif"/>
    <property type="match status" value="1"/>
</dbReference>
<dbReference type="InterPro" id="IPR037445">
    <property type="entry name" value="MAGE"/>
</dbReference>
<dbReference type="InterPro" id="IPR021072">
    <property type="entry name" value="MAGE_N"/>
</dbReference>
<dbReference type="InterPro" id="IPR041898">
    <property type="entry name" value="MAGE_WH1"/>
</dbReference>
<dbReference type="InterPro" id="IPR041899">
    <property type="entry name" value="MAGE_WH2"/>
</dbReference>
<dbReference type="InterPro" id="IPR002190">
    <property type="entry name" value="MHD_dom"/>
</dbReference>
<dbReference type="PANTHER" id="PTHR11736:SF67">
    <property type="entry name" value="MELANOMA-ASSOCIATED ANTIGEN B6B"/>
    <property type="match status" value="1"/>
</dbReference>
<dbReference type="PANTHER" id="PTHR11736">
    <property type="entry name" value="MELANOMA-ASSOCIATED ANTIGEN MAGE ANTIGEN"/>
    <property type="match status" value="1"/>
</dbReference>
<dbReference type="Pfam" id="PF01454">
    <property type="entry name" value="MAGE"/>
    <property type="match status" value="1"/>
</dbReference>
<dbReference type="Pfam" id="PF12440">
    <property type="entry name" value="MAGE_N"/>
    <property type="match status" value="1"/>
</dbReference>
<dbReference type="SMART" id="SM01373">
    <property type="entry name" value="MAGE"/>
    <property type="match status" value="1"/>
</dbReference>
<dbReference type="SMART" id="SM01392">
    <property type="entry name" value="MAGE_N"/>
    <property type="match status" value="2"/>
</dbReference>
<dbReference type="PROSITE" id="PS50838">
    <property type="entry name" value="MAGE"/>
    <property type="match status" value="1"/>
</dbReference>
<name>MAB6B_HUMAN</name>
<proteinExistence type="evidence at protein level"/>
<accession>A0A0J9YX57</accession>
<reference key="1">
    <citation type="journal article" date="2005" name="Nature">
        <title>The DNA sequence of the human X chromosome.</title>
        <authorList>
            <person name="Ross M.T."/>
            <person name="Grafham D.V."/>
            <person name="Coffey A.J."/>
            <person name="Scherer S."/>
            <person name="McLay K."/>
            <person name="Muzny D."/>
            <person name="Platzer M."/>
            <person name="Howell G.R."/>
            <person name="Burrows C."/>
            <person name="Bird C.P."/>
            <person name="Frankish A."/>
            <person name="Lovell F.L."/>
            <person name="Howe K.L."/>
            <person name="Ashurst J.L."/>
            <person name="Fulton R.S."/>
            <person name="Sudbrak R."/>
            <person name="Wen G."/>
            <person name="Jones M.C."/>
            <person name="Hurles M.E."/>
            <person name="Andrews T.D."/>
            <person name="Scott C.E."/>
            <person name="Searle S."/>
            <person name="Ramser J."/>
            <person name="Whittaker A."/>
            <person name="Deadman R."/>
            <person name="Carter N.P."/>
            <person name="Hunt S.E."/>
            <person name="Chen R."/>
            <person name="Cree A."/>
            <person name="Gunaratne P."/>
            <person name="Havlak P."/>
            <person name="Hodgson A."/>
            <person name="Metzker M.L."/>
            <person name="Richards S."/>
            <person name="Scott G."/>
            <person name="Steffen D."/>
            <person name="Sodergren E."/>
            <person name="Wheeler D.A."/>
            <person name="Worley K.C."/>
            <person name="Ainscough R."/>
            <person name="Ambrose K.D."/>
            <person name="Ansari-Lari M.A."/>
            <person name="Aradhya S."/>
            <person name="Ashwell R.I."/>
            <person name="Babbage A.K."/>
            <person name="Bagguley C.L."/>
            <person name="Ballabio A."/>
            <person name="Banerjee R."/>
            <person name="Barker G.E."/>
            <person name="Barlow K.F."/>
            <person name="Barrett I.P."/>
            <person name="Bates K.N."/>
            <person name="Beare D.M."/>
            <person name="Beasley H."/>
            <person name="Beasley O."/>
            <person name="Beck A."/>
            <person name="Bethel G."/>
            <person name="Blechschmidt K."/>
            <person name="Brady N."/>
            <person name="Bray-Allen S."/>
            <person name="Bridgeman A.M."/>
            <person name="Brown A.J."/>
            <person name="Brown M.J."/>
            <person name="Bonnin D."/>
            <person name="Bruford E.A."/>
            <person name="Buhay C."/>
            <person name="Burch P."/>
            <person name="Burford D."/>
            <person name="Burgess J."/>
            <person name="Burrill W."/>
            <person name="Burton J."/>
            <person name="Bye J.M."/>
            <person name="Carder C."/>
            <person name="Carrel L."/>
            <person name="Chako J."/>
            <person name="Chapman J.C."/>
            <person name="Chavez D."/>
            <person name="Chen E."/>
            <person name="Chen G."/>
            <person name="Chen Y."/>
            <person name="Chen Z."/>
            <person name="Chinault C."/>
            <person name="Ciccodicola A."/>
            <person name="Clark S.Y."/>
            <person name="Clarke G."/>
            <person name="Clee C.M."/>
            <person name="Clegg S."/>
            <person name="Clerc-Blankenburg K."/>
            <person name="Clifford K."/>
            <person name="Cobley V."/>
            <person name="Cole C.G."/>
            <person name="Conquer J.S."/>
            <person name="Corby N."/>
            <person name="Connor R.E."/>
            <person name="David R."/>
            <person name="Davies J."/>
            <person name="Davis C."/>
            <person name="Davis J."/>
            <person name="Delgado O."/>
            <person name="Deshazo D."/>
            <person name="Dhami P."/>
            <person name="Ding Y."/>
            <person name="Dinh H."/>
            <person name="Dodsworth S."/>
            <person name="Draper H."/>
            <person name="Dugan-Rocha S."/>
            <person name="Dunham A."/>
            <person name="Dunn M."/>
            <person name="Durbin K.J."/>
            <person name="Dutta I."/>
            <person name="Eades T."/>
            <person name="Ellwood M."/>
            <person name="Emery-Cohen A."/>
            <person name="Errington H."/>
            <person name="Evans K.L."/>
            <person name="Faulkner L."/>
            <person name="Francis F."/>
            <person name="Frankland J."/>
            <person name="Fraser A.E."/>
            <person name="Galgoczy P."/>
            <person name="Gilbert J."/>
            <person name="Gill R."/>
            <person name="Gloeckner G."/>
            <person name="Gregory S.G."/>
            <person name="Gribble S."/>
            <person name="Griffiths C."/>
            <person name="Grocock R."/>
            <person name="Gu Y."/>
            <person name="Gwilliam R."/>
            <person name="Hamilton C."/>
            <person name="Hart E.A."/>
            <person name="Hawes A."/>
            <person name="Heath P.D."/>
            <person name="Heitmann K."/>
            <person name="Hennig S."/>
            <person name="Hernandez J."/>
            <person name="Hinzmann B."/>
            <person name="Ho S."/>
            <person name="Hoffs M."/>
            <person name="Howden P.J."/>
            <person name="Huckle E.J."/>
            <person name="Hume J."/>
            <person name="Hunt P.J."/>
            <person name="Hunt A.R."/>
            <person name="Isherwood J."/>
            <person name="Jacob L."/>
            <person name="Johnson D."/>
            <person name="Jones S."/>
            <person name="de Jong P.J."/>
            <person name="Joseph S.S."/>
            <person name="Keenan S."/>
            <person name="Kelly S."/>
            <person name="Kershaw J.K."/>
            <person name="Khan Z."/>
            <person name="Kioschis P."/>
            <person name="Klages S."/>
            <person name="Knights A.J."/>
            <person name="Kosiura A."/>
            <person name="Kovar-Smith C."/>
            <person name="Laird G.K."/>
            <person name="Langford C."/>
            <person name="Lawlor S."/>
            <person name="Leversha M."/>
            <person name="Lewis L."/>
            <person name="Liu W."/>
            <person name="Lloyd C."/>
            <person name="Lloyd D.M."/>
            <person name="Loulseged H."/>
            <person name="Loveland J.E."/>
            <person name="Lovell J.D."/>
            <person name="Lozado R."/>
            <person name="Lu J."/>
            <person name="Lyne R."/>
            <person name="Ma J."/>
            <person name="Maheshwari M."/>
            <person name="Matthews L.H."/>
            <person name="McDowall J."/>
            <person name="McLaren S."/>
            <person name="McMurray A."/>
            <person name="Meidl P."/>
            <person name="Meitinger T."/>
            <person name="Milne S."/>
            <person name="Miner G."/>
            <person name="Mistry S.L."/>
            <person name="Morgan M."/>
            <person name="Morris S."/>
            <person name="Mueller I."/>
            <person name="Mullikin J.C."/>
            <person name="Nguyen N."/>
            <person name="Nordsiek G."/>
            <person name="Nyakatura G."/>
            <person name="O'dell C.N."/>
            <person name="Okwuonu G."/>
            <person name="Palmer S."/>
            <person name="Pandian R."/>
            <person name="Parker D."/>
            <person name="Parrish J."/>
            <person name="Pasternak S."/>
            <person name="Patel D."/>
            <person name="Pearce A.V."/>
            <person name="Pearson D.M."/>
            <person name="Pelan S.E."/>
            <person name="Perez L."/>
            <person name="Porter K.M."/>
            <person name="Ramsey Y."/>
            <person name="Reichwald K."/>
            <person name="Rhodes S."/>
            <person name="Ridler K.A."/>
            <person name="Schlessinger D."/>
            <person name="Schueler M.G."/>
            <person name="Sehra H.K."/>
            <person name="Shaw-Smith C."/>
            <person name="Shen H."/>
            <person name="Sheridan E.M."/>
            <person name="Shownkeen R."/>
            <person name="Skuce C.D."/>
            <person name="Smith M.L."/>
            <person name="Sotheran E.C."/>
            <person name="Steingruber H.E."/>
            <person name="Steward C.A."/>
            <person name="Storey R."/>
            <person name="Swann R.M."/>
            <person name="Swarbreck D."/>
            <person name="Tabor P.E."/>
            <person name="Taudien S."/>
            <person name="Taylor T."/>
            <person name="Teague B."/>
            <person name="Thomas K."/>
            <person name="Thorpe A."/>
            <person name="Timms K."/>
            <person name="Tracey A."/>
            <person name="Trevanion S."/>
            <person name="Tromans A.C."/>
            <person name="d'Urso M."/>
            <person name="Verduzco D."/>
            <person name="Villasana D."/>
            <person name="Waldron L."/>
            <person name="Wall M."/>
            <person name="Wang Q."/>
            <person name="Warren J."/>
            <person name="Warry G.L."/>
            <person name="Wei X."/>
            <person name="West A."/>
            <person name="Whitehead S.L."/>
            <person name="Whiteley M.N."/>
            <person name="Wilkinson J.E."/>
            <person name="Willey D.L."/>
            <person name="Williams G."/>
            <person name="Williams L."/>
            <person name="Williamson A."/>
            <person name="Williamson H."/>
            <person name="Wilming L."/>
            <person name="Woodmansey R.L."/>
            <person name="Wray P.W."/>
            <person name="Yen J."/>
            <person name="Zhang J."/>
            <person name="Zhou J."/>
            <person name="Zoghbi H."/>
            <person name="Zorilla S."/>
            <person name="Buck D."/>
            <person name="Reinhardt R."/>
            <person name="Poustka A."/>
            <person name="Rosenthal A."/>
            <person name="Lehrach H."/>
            <person name="Meindl A."/>
            <person name="Minx P.J."/>
            <person name="Hillier L.W."/>
            <person name="Willard H.F."/>
            <person name="Wilson R.K."/>
            <person name="Waterston R.H."/>
            <person name="Rice C.M."/>
            <person name="Vaudin M."/>
            <person name="Coulson A."/>
            <person name="Nelson D.L."/>
            <person name="Weinstock G."/>
            <person name="Sulston J.E."/>
            <person name="Durbin R.M."/>
            <person name="Hubbard T."/>
            <person name="Gibbs R.A."/>
            <person name="Beck S."/>
            <person name="Rogers J."/>
            <person name="Bentley D.R."/>
        </authorList>
    </citation>
    <scope>NUCLEOTIDE SEQUENCE [LARGE SCALE GENOMIC DNA]</scope>
</reference>
<evidence type="ECO:0000255" key="1">
    <source>
        <dbReference type="PROSITE-ProRule" id="PRU00127"/>
    </source>
</evidence>
<evidence type="ECO:0000256" key="2">
    <source>
        <dbReference type="SAM" id="MobiDB-lite"/>
    </source>
</evidence>
<evidence type="ECO:0000305" key="3"/>
<evidence type="ECO:0000312" key="4">
    <source>
        <dbReference type="HGNC" id="HGNC:28824"/>
    </source>
</evidence>
<gene>
    <name evidence="4" type="primary">MAGEB6B</name>
</gene>
<sequence length="407" mass="44251">MPRGQKSKLRARGKRRETHDQPQGLTGPQATAEKQEESRSSSSSSAVCQGARRRSSGSSVPQESQGASPTGYPDAGASCSKYDVAAMGQDEKSPSTSRDASVSQESQGASPIGPPDAGISCSKSDEAAKGQNEKSPSTSRDASVPQESQGASPTGSPDADVSGSKSDVAAKGQDEESLSSSKRAAFFTTTDGDPIKRKANKMVQFLQKKFEKKEPILKADMLKRLRRQYKPCFPEILKRTSEHLTVFFGVELKETDSSGESYTLVSKLGLSNEGSLSGDNALPKSGLLMSILGLIFMRGNRATEEEVWKFLGLLGIYDGILHSIYGDARKIITEDLVQDKYVVYRQVCNSDPPCYEFLWGPRAYAETTKMRVLRVLAEINNTSPGLYPHLYEDALTDEVERALRLRA</sequence>